<gene>
    <name type="primary">lec-8</name>
    <name type="ORF">R07B1.10</name>
</gene>
<accession>Q09610</accession>
<accession>Q9GNP9</accession>
<name>LEC8_CAEEL</name>
<evidence type="ECO:0000255" key="1">
    <source>
        <dbReference type="PROSITE-ProRule" id="PRU00639"/>
    </source>
</evidence>
<feature type="chain" id="PRO_0000076966" description="Probable galaptin lec-8">
    <location>
        <begin position="1"/>
        <end position="180"/>
    </location>
</feature>
<feature type="domain" description="Galectin" evidence="1">
    <location>
        <begin position="11"/>
        <end position="138"/>
    </location>
</feature>
<reference key="1">
    <citation type="submission" date="2000-02" db="EMBL/GenBank/DDBJ databases">
        <title>Novel galectins found in C. elegans.</title>
        <authorList>
            <person name="Hirabayashi J."/>
            <person name="Hayama K."/>
            <person name="Kasai K."/>
        </authorList>
    </citation>
    <scope>NUCLEOTIDE SEQUENCE [MRNA]</scope>
</reference>
<reference key="2">
    <citation type="journal article" date="1998" name="Science">
        <title>Genome sequence of the nematode C. elegans: a platform for investigating biology.</title>
        <authorList>
            <consortium name="The C. elegans sequencing consortium"/>
        </authorList>
    </citation>
    <scope>NUCLEOTIDE SEQUENCE [LARGE SCALE GENOMIC DNA]</scope>
    <source>
        <strain>Bristol N2</strain>
    </source>
</reference>
<sequence>MHTINSPDVPSAHAIREQLRAGSEIHVRGHVTHKHHKDFSVELLSGPHIVLHVNFRFEHDHIVAMNTCTNGAWGAEIRHHNPLKHHDHFNLSIHVHEGYYHISVNGEHLADFPHRFPVESVQAIGLKGAAHIDEISFSGFEFGVDWNSQHDFGHAGYNSYGTETYVAPVFQETHSYNAYF</sequence>
<keyword id="KW-0430">Lectin</keyword>
<keyword id="KW-1185">Reference proteome</keyword>
<protein>
    <recommendedName>
        <fullName>Probable galaptin lec-8</fullName>
    </recommendedName>
</protein>
<proteinExistence type="evidence at transcript level"/>
<organism>
    <name type="scientific">Caenorhabditis elegans</name>
    <dbReference type="NCBI Taxonomy" id="6239"/>
    <lineage>
        <taxon>Eukaryota</taxon>
        <taxon>Metazoa</taxon>
        <taxon>Ecdysozoa</taxon>
        <taxon>Nematoda</taxon>
        <taxon>Chromadorea</taxon>
        <taxon>Rhabditida</taxon>
        <taxon>Rhabditina</taxon>
        <taxon>Rhabditomorpha</taxon>
        <taxon>Rhabditoidea</taxon>
        <taxon>Rhabditidae</taxon>
        <taxon>Peloderinae</taxon>
        <taxon>Caenorhabditis</taxon>
    </lineage>
</organism>
<dbReference type="EMBL" id="AB038499">
    <property type="protein sequence ID" value="BAB11964.1"/>
    <property type="molecule type" value="mRNA"/>
</dbReference>
<dbReference type="EMBL" id="Z48621">
    <property type="protein sequence ID" value="CAA88548.2"/>
    <property type="molecule type" value="Genomic_DNA"/>
</dbReference>
<dbReference type="PIR" id="T24001">
    <property type="entry name" value="T24001"/>
</dbReference>
<dbReference type="RefSeq" id="NP_509649.1">
    <property type="nucleotide sequence ID" value="NM_077248.6"/>
</dbReference>
<dbReference type="SMR" id="Q09610"/>
<dbReference type="BioGRID" id="46113">
    <property type="interactions" value="2"/>
</dbReference>
<dbReference type="FunCoup" id="Q09610">
    <property type="interactions" value="8"/>
</dbReference>
<dbReference type="STRING" id="6239.R07B1.10.2"/>
<dbReference type="PaxDb" id="6239-R07B1.10"/>
<dbReference type="PeptideAtlas" id="Q09610"/>
<dbReference type="EnsemblMetazoa" id="R07B1.10.1">
    <property type="protein sequence ID" value="R07B1.10.1"/>
    <property type="gene ID" value="WBGene00002271"/>
</dbReference>
<dbReference type="GeneID" id="181198"/>
<dbReference type="KEGG" id="cel:CELE_R07B1.10"/>
<dbReference type="UCSC" id="R07B1.10.1">
    <property type="organism name" value="c. elegans"/>
</dbReference>
<dbReference type="AGR" id="WB:WBGene00002271"/>
<dbReference type="CTD" id="181198"/>
<dbReference type="WormBase" id="R07B1.10">
    <property type="protein sequence ID" value="CE26721"/>
    <property type="gene ID" value="WBGene00002271"/>
    <property type="gene designation" value="lec-8"/>
</dbReference>
<dbReference type="eggNOG" id="KOG3587">
    <property type="taxonomic scope" value="Eukaryota"/>
</dbReference>
<dbReference type="GeneTree" id="ENSGT00750000118601"/>
<dbReference type="HOGENOM" id="CLU_037794_3_1_1"/>
<dbReference type="InParanoid" id="Q09610"/>
<dbReference type="OMA" id="ETHSYNA"/>
<dbReference type="OrthoDB" id="6251307at2759"/>
<dbReference type="PhylomeDB" id="Q09610"/>
<dbReference type="Reactome" id="R-CEL-6798695">
    <property type="pathway name" value="Neutrophil degranulation"/>
</dbReference>
<dbReference type="PRO" id="PR:Q09610"/>
<dbReference type="Proteomes" id="UP000001940">
    <property type="component" value="Chromosome X"/>
</dbReference>
<dbReference type="Bgee" id="WBGene00002271">
    <property type="expression patterns" value="Expressed in adult organism and 4 other cell types or tissues"/>
</dbReference>
<dbReference type="GO" id="GO:0031410">
    <property type="term" value="C:cytoplasmic vesicle"/>
    <property type="evidence" value="ECO:0000314"/>
    <property type="project" value="WormBase"/>
</dbReference>
<dbReference type="GO" id="GO:0030246">
    <property type="term" value="F:carbohydrate binding"/>
    <property type="evidence" value="ECO:0000318"/>
    <property type="project" value="GO_Central"/>
</dbReference>
<dbReference type="GO" id="GO:0016936">
    <property type="term" value="F:galactoside binding"/>
    <property type="evidence" value="ECO:0000318"/>
    <property type="project" value="GO_Central"/>
</dbReference>
<dbReference type="GO" id="GO:0051861">
    <property type="term" value="F:glycolipid binding"/>
    <property type="evidence" value="ECO:0000314"/>
    <property type="project" value="WormBase"/>
</dbReference>
<dbReference type="GO" id="GO:0050830">
    <property type="term" value="P:defense response to Gram-positive bacterium"/>
    <property type="evidence" value="ECO:0000305"/>
    <property type="project" value="WormBase"/>
</dbReference>
<dbReference type="GO" id="GO:0030968">
    <property type="term" value="P:endoplasmic reticulum unfolded protein response"/>
    <property type="evidence" value="ECO:0007007"/>
    <property type="project" value="WormBase"/>
</dbReference>
<dbReference type="GO" id="GO:0036498">
    <property type="term" value="P:IRE1-mediated unfolded protein response"/>
    <property type="evidence" value="ECO:0007007"/>
    <property type="project" value="WormBase"/>
</dbReference>
<dbReference type="GO" id="GO:0009636">
    <property type="term" value="P:response to toxic substance"/>
    <property type="evidence" value="ECO:0000315"/>
    <property type="project" value="WormBase"/>
</dbReference>
<dbReference type="CDD" id="cd00070">
    <property type="entry name" value="GLECT"/>
    <property type="match status" value="1"/>
</dbReference>
<dbReference type="FunFam" id="2.60.120.200:FF:000213">
    <property type="entry name" value="Galectin"/>
    <property type="match status" value="1"/>
</dbReference>
<dbReference type="Gene3D" id="2.60.120.200">
    <property type="match status" value="1"/>
</dbReference>
<dbReference type="InterPro" id="IPR013320">
    <property type="entry name" value="ConA-like_dom_sf"/>
</dbReference>
<dbReference type="InterPro" id="IPR044156">
    <property type="entry name" value="Galectin-like"/>
</dbReference>
<dbReference type="InterPro" id="IPR001079">
    <property type="entry name" value="Galectin_CRD"/>
</dbReference>
<dbReference type="PANTHER" id="PTHR11346:SF174">
    <property type="entry name" value="GALAPTIN LEC-8-RELATED"/>
    <property type="match status" value="1"/>
</dbReference>
<dbReference type="PANTHER" id="PTHR11346">
    <property type="entry name" value="GALECTIN"/>
    <property type="match status" value="1"/>
</dbReference>
<dbReference type="Pfam" id="PF00337">
    <property type="entry name" value="Gal-bind_lectin"/>
    <property type="match status" value="1"/>
</dbReference>
<dbReference type="SMART" id="SM00908">
    <property type="entry name" value="Gal-bind_lectin"/>
    <property type="match status" value="1"/>
</dbReference>
<dbReference type="SMART" id="SM00276">
    <property type="entry name" value="GLECT"/>
    <property type="match status" value="1"/>
</dbReference>
<dbReference type="SUPFAM" id="SSF49899">
    <property type="entry name" value="Concanavalin A-like lectins/glucanases"/>
    <property type="match status" value="1"/>
</dbReference>
<dbReference type="PROSITE" id="PS51304">
    <property type="entry name" value="GALECTIN"/>
    <property type="match status" value="1"/>
</dbReference>